<protein>
    <recommendedName>
        <fullName evidence="1">Small ribosomal subunit protein uS15</fullName>
    </recommendedName>
    <alternativeName>
        <fullName evidence="2">30S ribosomal protein S15</fullName>
    </alternativeName>
</protein>
<evidence type="ECO:0000255" key="1">
    <source>
        <dbReference type="HAMAP-Rule" id="MF_01343"/>
    </source>
</evidence>
<evidence type="ECO:0000305" key="2"/>
<dbReference type="EMBL" id="CP001127">
    <property type="protein sequence ID" value="ACF92021.1"/>
    <property type="molecule type" value="Genomic_DNA"/>
</dbReference>
<dbReference type="RefSeq" id="WP_000059465.1">
    <property type="nucleotide sequence ID" value="NC_011094.1"/>
</dbReference>
<dbReference type="SMR" id="B4TWD4"/>
<dbReference type="GeneID" id="93035884"/>
<dbReference type="KEGG" id="sew:SeSA_A3471"/>
<dbReference type="HOGENOM" id="CLU_148518_0_0_6"/>
<dbReference type="Proteomes" id="UP000001865">
    <property type="component" value="Chromosome"/>
</dbReference>
<dbReference type="GO" id="GO:0022627">
    <property type="term" value="C:cytosolic small ribosomal subunit"/>
    <property type="evidence" value="ECO:0007669"/>
    <property type="project" value="TreeGrafter"/>
</dbReference>
<dbReference type="GO" id="GO:0019843">
    <property type="term" value="F:rRNA binding"/>
    <property type="evidence" value="ECO:0007669"/>
    <property type="project" value="UniProtKB-UniRule"/>
</dbReference>
<dbReference type="GO" id="GO:0003735">
    <property type="term" value="F:structural constituent of ribosome"/>
    <property type="evidence" value="ECO:0007669"/>
    <property type="project" value="InterPro"/>
</dbReference>
<dbReference type="GO" id="GO:0006412">
    <property type="term" value="P:translation"/>
    <property type="evidence" value="ECO:0007669"/>
    <property type="project" value="UniProtKB-UniRule"/>
</dbReference>
<dbReference type="CDD" id="cd00353">
    <property type="entry name" value="Ribosomal_S15p_S13e"/>
    <property type="match status" value="1"/>
</dbReference>
<dbReference type="FunFam" id="1.10.287.10:FF:000002">
    <property type="entry name" value="30S ribosomal protein S15"/>
    <property type="match status" value="1"/>
</dbReference>
<dbReference type="Gene3D" id="6.10.250.3130">
    <property type="match status" value="1"/>
</dbReference>
<dbReference type="Gene3D" id="1.10.287.10">
    <property type="entry name" value="S15/NS1, RNA-binding"/>
    <property type="match status" value="1"/>
</dbReference>
<dbReference type="HAMAP" id="MF_01343_B">
    <property type="entry name" value="Ribosomal_uS15_B"/>
    <property type="match status" value="1"/>
</dbReference>
<dbReference type="InterPro" id="IPR000589">
    <property type="entry name" value="Ribosomal_uS15"/>
</dbReference>
<dbReference type="InterPro" id="IPR005290">
    <property type="entry name" value="Ribosomal_uS15_bac-type"/>
</dbReference>
<dbReference type="InterPro" id="IPR009068">
    <property type="entry name" value="uS15_NS1_RNA-bd_sf"/>
</dbReference>
<dbReference type="NCBIfam" id="TIGR00952">
    <property type="entry name" value="S15_bact"/>
    <property type="match status" value="1"/>
</dbReference>
<dbReference type="PANTHER" id="PTHR23321">
    <property type="entry name" value="RIBOSOMAL PROTEIN S15, BACTERIAL AND ORGANELLAR"/>
    <property type="match status" value="1"/>
</dbReference>
<dbReference type="PANTHER" id="PTHR23321:SF26">
    <property type="entry name" value="SMALL RIBOSOMAL SUBUNIT PROTEIN US15M"/>
    <property type="match status" value="1"/>
</dbReference>
<dbReference type="Pfam" id="PF00312">
    <property type="entry name" value="Ribosomal_S15"/>
    <property type="match status" value="1"/>
</dbReference>
<dbReference type="SMART" id="SM01387">
    <property type="entry name" value="Ribosomal_S15"/>
    <property type="match status" value="1"/>
</dbReference>
<dbReference type="SUPFAM" id="SSF47060">
    <property type="entry name" value="S15/NS1 RNA-binding domain"/>
    <property type="match status" value="1"/>
</dbReference>
<dbReference type="PROSITE" id="PS00362">
    <property type="entry name" value="RIBOSOMAL_S15"/>
    <property type="match status" value="1"/>
</dbReference>
<comment type="function">
    <text evidence="1">One of the primary rRNA binding proteins, it binds directly to 16S rRNA where it helps nucleate assembly of the platform of the 30S subunit by binding and bridging several RNA helices of the 16S rRNA.</text>
</comment>
<comment type="function">
    <text evidence="1">Forms an intersubunit bridge (bridge B4) with the 23S rRNA of the 50S subunit in the ribosome.</text>
</comment>
<comment type="subunit">
    <text evidence="1">Part of the 30S ribosomal subunit. Forms a bridge to the 50S subunit in the 70S ribosome, contacting the 23S rRNA.</text>
</comment>
<comment type="similarity">
    <text evidence="1">Belongs to the universal ribosomal protein uS15 family.</text>
</comment>
<feature type="chain" id="PRO_1000143169" description="Small ribosomal subunit protein uS15">
    <location>
        <begin position="1"/>
        <end position="89"/>
    </location>
</feature>
<name>RS15_SALSV</name>
<reference key="1">
    <citation type="journal article" date="2011" name="J. Bacteriol.">
        <title>Comparative genomics of 28 Salmonella enterica isolates: evidence for CRISPR-mediated adaptive sublineage evolution.</title>
        <authorList>
            <person name="Fricke W.F."/>
            <person name="Mammel M.K."/>
            <person name="McDermott P.F."/>
            <person name="Tartera C."/>
            <person name="White D.G."/>
            <person name="Leclerc J.E."/>
            <person name="Ravel J."/>
            <person name="Cebula T.A."/>
        </authorList>
    </citation>
    <scope>NUCLEOTIDE SEQUENCE [LARGE SCALE GENOMIC DNA]</scope>
    <source>
        <strain>CVM19633</strain>
    </source>
</reference>
<keyword id="KW-0687">Ribonucleoprotein</keyword>
<keyword id="KW-0689">Ribosomal protein</keyword>
<keyword id="KW-0694">RNA-binding</keyword>
<keyword id="KW-0699">rRNA-binding</keyword>
<sequence>MSLSTEATAKIVSEFGRDANDTGSTDVQVALLTAQINHLQGHFAEHKKDHHSRRGLLRMVSQRRKLLDYLKRKDVARYTALIERLGLRR</sequence>
<gene>
    <name evidence="1" type="primary">rpsO</name>
    <name type="ordered locus">SeSA_A3471</name>
</gene>
<proteinExistence type="inferred from homology"/>
<organism>
    <name type="scientific">Salmonella schwarzengrund (strain CVM19633)</name>
    <dbReference type="NCBI Taxonomy" id="439843"/>
    <lineage>
        <taxon>Bacteria</taxon>
        <taxon>Pseudomonadati</taxon>
        <taxon>Pseudomonadota</taxon>
        <taxon>Gammaproteobacteria</taxon>
        <taxon>Enterobacterales</taxon>
        <taxon>Enterobacteriaceae</taxon>
        <taxon>Salmonella</taxon>
    </lineage>
</organism>
<accession>B4TWD4</accession>